<accession>Q0P5H1</accession>
<dbReference type="EC" id="1.8.3.-"/>
<dbReference type="EMBL" id="BC120048">
    <property type="protein sequence ID" value="AAI20049.1"/>
    <property type="molecule type" value="mRNA"/>
</dbReference>
<dbReference type="RefSeq" id="NP_001069141.1">
    <property type="nucleotide sequence ID" value="NM_001075673.1"/>
</dbReference>
<dbReference type="SMR" id="Q0P5H1"/>
<dbReference type="FunCoup" id="Q0P5H1">
    <property type="interactions" value="2340"/>
</dbReference>
<dbReference type="STRING" id="9913.ENSBTAP00000026577"/>
<dbReference type="GlyCosmos" id="Q0P5H1">
    <property type="glycosylation" value="1 site, No reported glycans"/>
</dbReference>
<dbReference type="GlyGen" id="Q0P5H1">
    <property type="glycosylation" value="1 site"/>
</dbReference>
<dbReference type="PaxDb" id="9913-ENSBTAP00000026577"/>
<dbReference type="GeneID" id="514598"/>
<dbReference type="KEGG" id="bta:514598"/>
<dbReference type="CTD" id="78991"/>
<dbReference type="eggNOG" id="ENOG502QSHJ">
    <property type="taxonomic scope" value="Eukaryota"/>
</dbReference>
<dbReference type="HOGENOM" id="CLU_021176_1_0_1"/>
<dbReference type="InParanoid" id="Q0P5H1"/>
<dbReference type="OrthoDB" id="437369at2759"/>
<dbReference type="TreeFam" id="TF329001"/>
<dbReference type="Proteomes" id="UP000009136">
    <property type="component" value="Unplaced"/>
</dbReference>
<dbReference type="GO" id="GO:0005576">
    <property type="term" value="C:extracellular region"/>
    <property type="evidence" value="ECO:0007669"/>
    <property type="project" value="UniProtKB-SubCell"/>
</dbReference>
<dbReference type="GO" id="GO:0001735">
    <property type="term" value="F:prenylcysteine oxidase activity"/>
    <property type="evidence" value="ECO:0000318"/>
    <property type="project" value="GO_Central"/>
</dbReference>
<dbReference type="GO" id="GO:0030327">
    <property type="term" value="P:prenylated protein catabolic process"/>
    <property type="evidence" value="ECO:0000318"/>
    <property type="project" value="GO_Central"/>
</dbReference>
<dbReference type="GO" id="GO:0030328">
    <property type="term" value="P:prenylcysteine catabolic process"/>
    <property type="evidence" value="ECO:0007669"/>
    <property type="project" value="InterPro"/>
</dbReference>
<dbReference type="FunFam" id="3.50.50.60:FF:000081">
    <property type="entry name" value="prenylcysteine oxidase 1"/>
    <property type="match status" value="1"/>
</dbReference>
<dbReference type="Gene3D" id="3.50.50.60">
    <property type="entry name" value="FAD/NAD(P)-binding domain"/>
    <property type="match status" value="1"/>
</dbReference>
<dbReference type="InterPro" id="IPR036188">
    <property type="entry name" value="FAD/NAD-bd_sf"/>
</dbReference>
<dbReference type="InterPro" id="IPR010795">
    <property type="entry name" value="Prenylcys_lyase"/>
</dbReference>
<dbReference type="InterPro" id="IPR017046">
    <property type="entry name" value="Prenylcysteine_Oxase1"/>
</dbReference>
<dbReference type="PANTHER" id="PTHR15944">
    <property type="entry name" value="FARNESYLCYSTEINE LYASE"/>
    <property type="match status" value="1"/>
</dbReference>
<dbReference type="PANTHER" id="PTHR15944:SF2">
    <property type="entry name" value="PRENYLCYSTEINE OXIDASE-LIKE"/>
    <property type="match status" value="1"/>
</dbReference>
<dbReference type="Pfam" id="PF13450">
    <property type="entry name" value="NAD_binding_8"/>
    <property type="match status" value="1"/>
</dbReference>
<dbReference type="Pfam" id="PF07156">
    <property type="entry name" value="Prenylcys_lyase"/>
    <property type="match status" value="1"/>
</dbReference>
<dbReference type="PIRSF" id="PIRSF036292">
    <property type="entry name" value="Prenylcysteine_oxidase"/>
    <property type="match status" value="1"/>
</dbReference>
<dbReference type="SUPFAM" id="SSF51905">
    <property type="entry name" value="FAD/NAD(P)-binding domain"/>
    <property type="match status" value="1"/>
</dbReference>
<gene>
    <name type="primary">PCYOX1L</name>
</gene>
<keyword id="KW-0274">FAD</keyword>
<keyword id="KW-0285">Flavoprotein</keyword>
<keyword id="KW-0325">Glycoprotein</keyword>
<keyword id="KW-0560">Oxidoreductase</keyword>
<keyword id="KW-1185">Reference proteome</keyword>
<keyword id="KW-0964">Secreted</keyword>
<keyword id="KW-0732">Signal</keyword>
<organism>
    <name type="scientific">Bos taurus</name>
    <name type="common">Bovine</name>
    <dbReference type="NCBI Taxonomy" id="9913"/>
    <lineage>
        <taxon>Eukaryota</taxon>
        <taxon>Metazoa</taxon>
        <taxon>Chordata</taxon>
        <taxon>Craniata</taxon>
        <taxon>Vertebrata</taxon>
        <taxon>Euteleostomi</taxon>
        <taxon>Mammalia</taxon>
        <taxon>Eutheria</taxon>
        <taxon>Laurasiatheria</taxon>
        <taxon>Artiodactyla</taxon>
        <taxon>Ruminantia</taxon>
        <taxon>Pecora</taxon>
        <taxon>Bovidae</taxon>
        <taxon>Bovinae</taxon>
        <taxon>Bos</taxon>
    </lineage>
</organism>
<proteinExistence type="evidence at transcript level"/>
<comment type="function">
    <text evidence="1 5">Likely to have oxidoreductase activity (Probable). Required in the mevalonate pathway to regulate prenylation and enhances the bactericidal activity of neutrophils (By similarity).</text>
</comment>
<comment type="cofactor">
    <cofactor evidence="3">
        <name>FAD</name>
        <dbReference type="ChEBI" id="CHEBI:57692"/>
    </cofactor>
</comment>
<comment type="subcellular location">
    <subcellularLocation>
        <location evidence="5">Secreted</location>
    </subcellularLocation>
</comment>
<comment type="similarity">
    <text evidence="5">Belongs to the prenylcysteine oxidase family.</text>
</comment>
<protein>
    <recommendedName>
        <fullName>Prenylcysteine oxidase 1-like</fullName>
        <ecNumber>1.8.3.-</ecNumber>
    </recommendedName>
</protein>
<reference key="1">
    <citation type="submission" date="2006-08" db="EMBL/GenBank/DDBJ databases">
        <authorList>
            <consortium name="NIH - Mammalian Gene Collection (MGC) project"/>
        </authorList>
    </citation>
    <scope>NUCLEOTIDE SEQUENCE [LARGE SCALE MRNA]</scope>
    <source>
        <strain>Hereford</strain>
        <tissue>Fetal pons</tissue>
    </source>
</reference>
<name>PCYXL_BOVIN</name>
<feature type="signal peptide" evidence="2">
    <location>
        <begin position="1"/>
        <end position="21"/>
    </location>
</feature>
<feature type="chain" id="PRO_0000280285" description="Prenylcysteine oxidase 1-like">
    <location>
        <begin position="22"/>
        <end position="492"/>
    </location>
</feature>
<feature type="glycosylation site" description="N-linked (GlcNAc...) asparagine" evidence="4">
    <location>
        <position position="340"/>
    </location>
</feature>
<evidence type="ECO:0000250" key="1">
    <source>
        <dbReference type="UniProtKB" id="Q8C7K6"/>
    </source>
</evidence>
<evidence type="ECO:0000250" key="2">
    <source>
        <dbReference type="UniProtKB" id="Q8NBM8"/>
    </source>
</evidence>
<evidence type="ECO:0000250" key="3">
    <source>
        <dbReference type="UniProtKB" id="Q9UHG3"/>
    </source>
</evidence>
<evidence type="ECO:0000255" key="4"/>
<evidence type="ECO:0000305" key="5"/>
<sequence length="492" mass="54437">MAHAARLLAALAALLAAAATGDARPSKIAVVGAGIGGSAVAHFLQQHFGPRVQIDVFEKGTVGGRLATISVNKQHYESGAASFHSLSLHMQGFVKQLGLRHRREVGGRSAIFNGENFVLEETDWYLLNLFRLWWHYGISFLRLQMWVEEVMEKFMRIYKYQAHGYAFSGVEELLYSLGESAFVNMTQRSVAESLLQVGVTQRFIDDVVSAVLRASYGQSAAMPAFAGAMSLAGAQGSLWSVEGGNKLVCSGLLKLTKANVIHATVTTVTLQPTEGKPLYRVRYENEAGTGSDNYDIVVIATPLHLDNSSTIAFEGFDPPIDVVQGSFQPTIVSLVHGYLNSSYFGFPDPKLFPFANILTTDFPTFFCALDNICPVNISASFRRKQPQEAAVWRVQSPQPLLRSQLKTLFRSYYSVQTAEWQAHPVHSPHTPLPRFTLHDQLFHLNALEWAASSVEVTAVAAKNVALLAFNRWYQDLDKIDQKDLMHKVKTEL</sequence>